<dbReference type="EC" id="2.8.1.6" evidence="1"/>
<dbReference type="EMBL" id="CP000521">
    <property type="protein sequence ID" value="ABO11938.2"/>
    <property type="molecule type" value="Genomic_DNA"/>
</dbReference>
<dbReference type="RefSeq" id="WP_000175360.1">
    <property type="nucleotide sequence ID" value="NZ_CP053098.1"/>
</dbReference>
<dbReference type="SMR" id="A3M4U4"/>
<dbReference type="KEGG" id="acb:A1S_1511"/>
<dbReference type="HOGENOM" id="CLU_033172_1_2_6"/>
<dbReference type="UniPathway" id="UPA00078">
    <property type="reaction ID" value="UER00162"/>
</dbReference>
<dbReference type="GO" id="GO:0051537">
    <property type="term" value="F:2 iron, 2 sulfur cluster binding"/>
    <property type="evidence" value="ECO:0007669"/>
    <property type="project" value="UniProtKB-KW"/>
</dbReference>
<dbReference type="GO" id="GO:0051539">
    <property type="term" value="F:4 iron, 4 sulfur cluster binding"/>
    <property type="evidence" value="ECO:0007669"/>
    <property type="project" value="UniProtKB-KW"/>
</dbReference>
<dbReference type="GO" id="GO:0004076">
    <property type="term" value="F:biotin synthase activity"/>
    <property type="evidence" value="ECO:0007669"/>
    <property type="project" value="UniProtKB-UniRule"/>
</dbReference>
<dbReference type="GO" id="GO:0005506">
    <property type="term" value="F:iron ion binding"/>
    <property type="evidence" value="ECO:0007669"/>
    <property type="project" value="UniProtKB-UniRule"/>
</dbReference>
<dbReference type="GO" id="GO:0009102">
    <property type="term" value="P:biotin biosynthetic process"/>
    <property type="evidence" value="ECO:0007669"/>
    <property type="project" value="UniProtKB-UniRule"/>
</dbReference>
<dbReference type="CDD" id="cd01335">
    <property type="entry name" value="Radical_SAM"/>
    <property type="match status" value="1"/>
</dbReference>
<dbReference type="FunFam" id="3.20.20.70:FF:000011">
    <property type="entry name" value="Biotin synthase"/>
    <property type="match status" value="1"/>
</dbReference>
<dbReference type="Gene3D" id="3.20.20.70">
    <property type="entry name" value="Aldolase class I"/>
    <property type="match status" value="1"/>
</dbReference>
<dbReference type="HAMAP" id="MF_01694">
    <property type="entry name" value="BioB"/>
    <property type="match status" value="1"/>
</dbReference>
<dbReference type="InterPro" id="IPR013785">
    <property type="entry name" value="Aldolase_TIM"/>
</dbReference>
<dbReference type="InterPro" id="IPR010722">
    <property type="entry name" value="BATS_dom"/>
</dbReference>
<dbReference type="InterPro" id="IPR002684">
    <property type="entry name" value="Biotin_synth/BioAB"/>
</dbReference>
<dbReference type="InterPro" id="IPR024177">
    <property type="entry name" value="Biotin_synthase"/>
</dbReference>
<dbReference type="InterPro" id="IPR006638">
    <property type="entry name" value="Elp3/MiaA/NifB-like_rSAM"/>
</dbReference>
<dbReference type="InterPro" id="IPR007197">
    <property type="entry name" value="rSAM"/>
</dbReference>
<dbReference type="NCBIfam" id="TIGR00433">
    <property type="entry name" value="bioB"/>
    <property type="match status" value="1"/>
</dbReference>
<dbReference type="PANTHER" id="PTHR22976">
    <property type="entry name" value="BIOTIN SYNTHASE"/>
    <property type="match status" value="1"/>
</dbReference>
<dbReference type="PANTHER" id="PTHR22976:SF2">
    <property type="entry name" value="BIOTIN SYNTHASE, MITOCHONDRIAL"/>
    <property type="match status" value="1"/>
</dbReference>
<dbReference type="Pfam" id="PF06968">
    <property type="entry name" value="BATS"/>
    <property type="match status" value="1"/>
</dbReference>
<dbReference type="Pfam" id="PF04055">
    <property type="entry name" value="Radical_SAM"/>
    <property type="match status" value="1"/>
</dbReference>
<dbReference type="PIRSF" id="PIRSF001619">
    <property type="entry name" value="Biotin_synth"/>
    <property type="match status" value="1"/>
</dbReference>
<dbReference type="SFLD" id="SFLDF00272">
    <property type="entry name" value="biotin_synthase"/>
    <property type="match status" value="1"/>
</dbReference>
<dbReference type="SFLD" id="SFLDS00029">
    <property type="entry name" value="Radical_SAM"/>
    <property type="match status" value="1"/>
</dbReference>
<dbReference type="SMART" id="SM00876">
    <property type="entry name" value="BATS"/>
    <property type="match status" value="1"/>
</dbReference>
<dbReference type="SMART" id="SM00729">
    <property type="entry name" value="Elp3"/>
    <property type="match status" value="1"/>
</dbReference>
<dbReference type="SUPFAM" id="SSF102114">
    <property type="entry name" value="Radical SAM enzymes"/>
    <property type="match status" value="1"/>
</dbReference>
<dbReference type="PROSITE" id="PS51918">
    <property type="entry name" value="RADICAL_SAM"/>
    <property type="match status" value="1"/>
</dbReference>
<gene>
    <name evidence="1" type="primary">bioB</name>
    <name type="ordered locus">A1S_1511</name>
</gene>
<sequence>MTLRNDWTREEIQALYEQPFLDLVFKAQQVHREHFTANTIQVSTLLSIKTGKCPEDCKYCSQSAHYDSKLEAEKRIAVEKVISEAKAAKDSGSSRFCMGAAWRNPHERDMPYVLEMVREVKALGMETCMTLGMLNQSQAERLKDAGLDYYNHNLDTSREYYSHIISTRTFDDRLNTLDYVRQAGMKVCSGGIVGLGESREDRIGLLHELATLPIHPESVPINMLVPIEGTPLADVEKLDVIEWIRTIAVARIIMPHSYIRLSAGRESLSDSDQALAFMAGANSLFSGDKLLTTPNAGEGKDQALFNKLGLTAEKPKPTVSDLSVDAMSA</sequence>
<proteinExistence type="inferred from homology"/>
<accession>A3M4U4</accession>
<organism>
    <name type="scientific">Acinetobacter baumannii (strain ATCC 17978 / DSM 105126 / CIP 53.77 / LMG 1025 / NCDC KC755 / 5377)</name>
    <dbReference type="NCBI Taxonomy" id="400667"/>
    <lineage>
        <taxon>Bacteria</taxon>
        <taxon>Pseudomonadati</taxon>
        <taxon>Pseudomonadota</taxon>
        <taxon>Gammaproteobacteria</taxon>
        <taxon>Moraxellales</taxon>
        <taxon>Moraxellaceae</taxon>
        <taxon>Acinetobacter</taxon>
        <taxon>Acinetobacter calcoaceticus/baumannii complex</taxon>
    </lineage>
</organism>
<protein>
    <recommendedName>
        <fullName evidence="1">Biotin synthase</fullName>
        <ecNumber evidence="1">2.8.1.6</ecNumber>
    </recommendedName>
</protein>
<keyword id="KW-0001">2Fe-2S</keyword>
<keyword id="KW-0004">4Fe-4S</keyword>
<keyword id="KW-0093">Biotin biosynthesis</keyword>
<keyword id="KW-0408">Iron</keyword>
<keyword id="KW-0411">Iron-sulfur</keyword>
<keyword id="KW-0479">Metal-binding</keyword>
<keyword id="KW-0949">S-adenosyl-L-methionine</keyword>
<keyword id="KW-0808">Transferase</keyword>
<name>BIOB_ACIBT</name>
<comment type="function">
    <text evidence="1">Catalyzes the conversion of dethiobiotin (DTB) to biotin by the insertion of a sulfur atom into dethiobiotin via a radical-based mechanism.</text>
</comment>
<comment type="catalytic activity">
    <reaction evidence="1">
        <text>(4R,5S)-dethiobiotin + (sulfur carrier)-SH + 2 reduced [2Fe-2S]-[ferredoxin] + 2 S-adenosyl-L-methionine = (sulfur carrier)-H + biotin + 2 5'-deoxyadenosine + 2 L-methionine + 2 oxidized [2Fe-2S]-[ferredoxin]</text>
        <dbReference type="Rhea" id="RHEA:22060"/>
        <dbReference type="Rhea" id="RHEA-COMP:10000"/>
        <dbReference type="Rhea" id="RHEA-COMP:10001"/>
        <dbReference type="Rhea" id="RHEA-COMP:14737"/>
        <dbReference type="Rhea" id="RHEA-COMP:14739"/>
        <dbReference type="ChEBI" id="CHEBI:17319"/>
        <dbReference type="ChEBI" id="CHEBI:29917"/>
        <dbReference type="ChEBI" id="CHEBI:33737"/>
        <dbReference type="ChEBI" id="CHEBI:33738"/>
        <dbReference type="ChEBI" id="CHEBI:57586"/>
        <dbReference type="ChEBI" id="CHEBI:57844"/>
        <dbReference type="ChEBI" id="CHEBI:59789"/>
        <dbReference type="ChEBI" id="CHEBI:64428"/>
        <dbReference type="ChEBI" id="CHEBI:149473"/>
        <dbReference type="EC" id="2.8.1.6"/>
    </reaction>
</comment>
<comment type="cofactor">
    <cofactor evidence="1">
        <name>[4Fe-4S] cluster</name>
        <dbReference type="ChEBI" id="CHEBI:49883"/>
    </cofactor>
    <text evidence="1">Binds 1 [4Fe-4S] cluster. The cluster is coordinated with 3 cysteines and an exchangeable S-adenosyl-L-methionine.</text>
</comment>
<comment type="cofactor">
    <cofactor evidence="1">
        <name>[2Fe-2S] cluster</name>
        <dbReference type="ChEBI" id="CHEBI:190135"/>
    </cofactor>
    <text evidence="1">Binds 1 [2Fe-2S] cluster. The cluster is coordinated with 3 cysteines and 1 arginine.</text>
</comment>
<comment type="pathway">
    <text evidence="1">Cofactor biosynthesis; biotin biosynthesis; biotin from 7,8-diaminononanoate: step 2/2.</text>
</comment>
<comment type="subunit">
    <text evidence="1">Homodimer.</text>
</comment>
<comment type="similarity">
    <text evidence="1">Belongs to the radical SAM superfamily. Biotin synthase family.</text>
</comment>
<feature type="chain" id="PRO_0000381172" description="Biotin synthase">
    <location>
        <begin position="1"/>
        <end position="329"/>
    </location>
</feature>
<feature type="domain" description="Radical SAM core" evidence="2">
    <location>
        <begin position="38"/>
        <end position="262"/>
    </location>
</feature>
<feature type="binding site" evidence="1">
    <location>
        <position position="53"/>
    </location>
    <ligand>
        <name>[4Fe-4S] cluster</name>
        <dbReference type="ChEBI" id="CHEBI:49883"/>
        <note>4Fe-4S-S-AdoMet</note>
    </ligand>
</feature>
<feature type="binding site" evidence="1">
    <location>
        <position position="57"/>
    </location>
    <ligand>
        <name>[4Fe-4S] cluster</name>
        <dbReference type="ChEBI" id="CHEBI:49883"/>
        <note>4Fe-4S-S-AdoMet</note>
    </ligand>
</feature>
<feature type="binding site" evidence="1">
    <location>
        <position position="60"/>
    </location>
    <ligand>
        <name>[4Fe-4S] cluster</name>
        <dbReference type="ChEBI" id="CHEBI:49883"/>
        <note>4Fe-4S-S-AdoMet</note>
    </ligand>
</feature>
<feature type="binding site" evidence="1">
    <location>
        <position position="97"/>
    </location>
    <ligand>
        <name>[2Fe-2S] cluster</name>
        <dbReference type="ChEBI" id="CHEBI:190135"/>
    </ligand>
</feature>
<feature type="binding site" evidence="1">
    <location>
        <position position="128"/>
    </location>
    <ligand>
        <name>[2Fe-2S] cluster</name>
        <dbReference type="ChEBI" id="CHEBI:190135"/>
    </ligand>
</feature>
<feature type="binding site" evidence="1">
    <location>
        <position position="188"/>
    </location>
    <ligand>
        <name>[2Fe-2S] cluster</name>
        <dbReference type="ChEBI" id="CHEBI:190135"/>
    </ligand>
</feature>
<feature type="binding site" evidence="1">
    <location>
        <position position="260"/>
    </location>
    <ligand>
        <name>[2Fe-2S] cluster</name>
        <dbReference type="ChEBI" id="CHEBI:190135"/>
    </ligand>
</feature>
<evidence type="ECO:0000255" key="1">
    <source>
        <dbReference type="HAMAP-Rule" id="MF_01694"/>
    </source>
</evidence>
<evidence type="ECO:0000255" key="2">
    <source>
        <dbReference type="PROSITE-ProRule" id="PRU01266"/>
    </source>
</evidence>
<reference key="1">
    <citation type="journal article" date="2007" name="Genes Dev.">
        <title>New insights into Acinetobacter baumannii pathogenesis revealed by high-density pyrosequencing and transposon mutagenesis.</title>
        <authorList>
            <person name="Smith M.G."/>
            <person name="Gianoulis T.A."/>
            <person name="Pukatzki S."/>
            <person name="Mekalanos J.J."/>
            <person name="Ornston L.N."/>
            <person name="Gerstein M."/>
            <person name="Snyder M."/>
        </authorList>
    </citation>
    <scope>NUCLEOTIDE SEQUENCE [LARGE SCALE GENOMIC DNA]</scope>
    <source>
        <strain>ATCC 17978 / DSM 105126 / CIP 53.77 / LMG 1025 / NCDC KC755 / 5377</strain>
    </source>
</reference>